<protein>
    <recommendedName>
        <fullName>Protein ROP</fullName>
    </recommendedName>
</protein>
<name>ROP_DROME</name>
<reference key="1">
    <citation type="journal article" date="1993" name="Development">
        <title>The Drosophila Ras2 and Rop gene pair: a dual homology with a yeast Ras-like gene and a suppressor of its loss-of-function phenotype.</title>
        <authorList>
            <person name="Salzberg A."/>
            <person name="Cohen N."/>
            <person name="Halachmi N."/>
            <person name="Kimchie Z."/>
            <person name="Lev Z."/>
        </authorList>
    </citation>
    <scope>NUCLEOTIDE SEQUENCE [MRNA]</scope>
</reference>
<reference key="2">
    <citation type="journal article" date="1994" name="Neuron">
        <title>Mutations in the Drosophila Rop gene suggest a function in general secretion and synaptic transmission.</title>
        <authorList>
            <person name="Harrison S.D."/>
            <person name="Broadie K."/>
            <person name="de Goor J."/>
            <person name="Rubin G.M."/>
        </authorList>
    </citation>
    <scope>NUCLEOTIDE SEQUENCE [GENOMIC DNA]</scope>
    <source>
        <strain>Iso-1 / Kennison</strain>
    </source>
</reference>
<reference key="3">
    <citation type="journal article" date="2000" name="Science">
        <title>The genome sequence of Drosophila melanogaster.</title>
        <authorList>
            <person name="Adams M.D."/>
            <person name="Celniker S.E."/>
            <person name="Holt R.A."/>
            <person name="Evans C.A."/>
            <person name="Gocayne J.D."/>
            <person name="Amanatides P.G."/>
            <person name="Scherer S.E."/>
            <person name="Li P.W."/>
            <person name="Hoskins R.A."/>
            <person name="Galle R.F."/>
            <person name="George R.A."/>
            <person name="Lewis S.E."/>
            <person name="Richards S."/>
            <person name="Ashburner M."/>
            <person name="Henderson S.N."/>
            <person name="Sutton G.G."/>
            <person name="Wortman J.R."/>
            <person name="Yandell M.D."/>
            <person name="Zhang Q."/>
            <person name="Chen L.X."/>
            <person name="Brandon R.C."/>
            <person name="Rogers Y.-H.C."/>
            <person name="Blazej R.G."/>
            <person name="Champe M."/>
            <person name="Pfeiffer B.D."/>
            <person name="Wan K.H."/>
            <person name="Doyle C."/>
            <person name="Baxter E.G."/>
            <person name="Helt G."/>
            <person name="Nelson C.R."/>
            <person name="Miklos G.L.G."/>
            <person name="Abril J.F."/>
            <person name="Agbayani A."/>
            <person name="An H.-J."/>
            <person name="Andrews-Pfannkoch C."/>
            <person name="Baldwin D."/>
            <person name="Ballew R.M."/>
            <person name="Basu A."/>
            <person name="Baxendale J."/>
            <person name="Bayraktaroglu L."/>
            <person name="Beasley E.M."/>
            <person name="Beeson K.Y."/>
            <person name="Benos P.V."/>
            <person name="Berman B.P."/>
            <person name="Bhandari D."/>
            <person name="Bolshakov S."/>
            <person name="Borkova D."/>
            <person name="Botchan M.R."/>
            <person name="Bouck J."/>
            <person name="Brokstein P."/>
            <person name="Brottier P."/>
            <person name="Burtis K.C."/>
            <person name="Busam D.A."/>
            <person name="Butler H."/>
            <person name="Cadieu E."/>
            <person name="Center A."/>
            <person name="Chandra I."/>
            <person name="Cherry J.M."/>
            <person name="Cawley S."/>
            <person name="Dahlke C."/>
            <person name="Davenport L.B."/>
            <person name="Davies P."/>
            <person name="de Pablos B."/>
            <person name="Delcher A."/>
            <person name="Deng Z."/>
            <person name="Mays A.D."/>
            <person name="Dew I."/>
            <person name="Dietz S.M."/>
            <person name="Dodson K."/>
            <person name="Doup L.E."/>
            <person name="Downes M."/>
            <person name="Dugan-Rocha S."/>
            <person name="Dunkov B.C."/>
            <person name="Dunn P."/>
            <person name="Durbin K.J."/>
            <person name="Evangelista C.C."/>
            <person name="Ferraz C."/>
            <person name="Ferriera S."/>
            <person name="Fleischmann W."/>
            <person name="Fosler C."/>
            <person name="Gabrielian A.E."/>
            <person name="Garg N.S."/>
            <person name="Gelbart W.M."/>
            <person name="Glasser K."/>
            <person name="Glodek A."/>
            <person name="Gong F."/>
            <person name="Gorrell J.H."/>
            <person name="Gu Z."/>
            <person name="Guan P."/>
            <person name="Harris M."/>
            <person name="Harris N.L."/>
            <person name="Harvey D.A."/>
            <person name="Heiman T.J."/>
            <person name="Hernandez J.R."/>
            <person name="Houck J."/>
            <person name="Hostin D."/>
            <person name="Houston K.A."/>
            <person name="Howland T.J."/>
            <person name="Wei M.-H."/>
            <person name="Ibegwam C."/>
            <person name="Jalali M."/>
            <person name="Kalush F."/>
            <person name="Karpen G.H."/>
            <person name="Ke Z."/>
            <person name="Kennison J.A."/>
            <person name="Ketchum K.A."/>
            <person name="Kimmel B.E."/>
            <person name="Kodira C.D."/>
            <person name="Kraft C.L."/>
            <person name="Kravitz S."/>
            <person name="Kulp D."/>
            <person name="Lai Z."/>
            <person name="Lasko P."/>
            <person name="Lei Y."/>
            <person name="Levitsky A.A."/>
            <person name="Li J.H."/>
            <person name="Li Z."/>
            <person name="Liang Y."/>
            <person name="Lin X."/>
            <person name="Liu X."/>
            <person name="Mattei B."/>
            <person name="McIntosh T.C."/>
            <person name="McLeod M.P."/>
            <person name="McPherson D."/>
            <person name="Merkulov G."/>
            <person name="Milshina N.V."/>
            <person name="Mobarry C."/>
            <person name="Morris J."/>
            <person name="Moshrefi A."/>
            <person name="Mount S.M."/>
            <person name="Moy M."/>
            <person name="Murphy B."/>
            <person name="Murphy L."/>
            <person name="Muzny D.M."/>
            <person name="Nelson D.L."/>
            <person name="Nelson D.R."/>
            <person name="Nelson K.A."/>
            <person name="Nixon K."/>
            <person name="Nusskern D.R."/>
            <person name="Pacleb J.M."/>
            <person name="Palazzolo M."/>
            <person name="Pittman G.S."/>
            <person name="Pan S."/>
            <person name="Pollard J."/>
            <person name="Puri V."/>
            <person name="Reese M.G."/>
            <person name="Reinert K."/>
            <person name="Remington K."/>
            <person name="Saunders R.D.C."/>
            <person name="Scheeler F."/>
            <person name="Shen H."/>
            <person name="Shue B.C."/>
            <person name="Siden-Kiamos I."/>
            <person name="Simpson M."/>
            <person name="Skupski M.P."/>
            <person name="Smith T.J."/>
            <person name="Spier E."/>
            <person name="Spradling A.C."/>
            <person name="Stapleton M."/>
            <person name="Strong R."/>
            <person name="Sun E."/>
            <person name="Svirskas R."/>
            <person name="Tector C."/>
            <person name="Turner R."/>
            <person name="Venter E."/>
            <person name="Wang A.H."/>
            <person name="Wang X."/>
            <person name="Wang Z.-Y."/>
            <person name="Wassarman D.A."/>
            <person name="Weinstock G.M."/>
            <person name="Weissenbach J."/>
            <person name="Williams S.M."/>
            <person name="Woodage T."/>
            <person name="Worley K.C."/>
            <person name="Wu D."/>
            <person name="Yang S."/>
            <person name="Yao Q.A."/>
            <person name="Ye J."/>
            <person name="Yeh R.-F."/>
            <person name="Zaveri J.S."/>
            <person name="Zhan M."/>
            <person name="Zhang G."/>
            <person name="Zhao Q."/>
            <person name="Zheng L."/>
            <person name="Zheng X.H."/>
            <person name="Zhong F.N."/>
            <person name="Zhong W."/>
            <person name="Zhou X."/>
            <person name="Zhu S.C."/>
            <person name="Zhu X."/>
            <person name="Smith H.O."/>
            <person name="Gibbs R.A."/>
            <person name="Myers E.W."/>
            <person name="Rubin G.M."/>
            <person name="Venter J.C."/>
        </authorList>
    </citation>
    <scope>NUCLEOTIDE SEQUENCE [LARGE SCALE GENOMIC DNA]</scope>
    <source>
        <strain>Berkeley</strain>
    </source>
</reference>
<reference key="4">
    <citation type="journal article" date="2002" name="Genome Biol.">
        <title>Annotation of the Drosophila melanogaster euchromatic genome: a systematic review.</title>
        <authorList>
            <person name="Misra S."/>
            <person name="Crosby M.A."/>
            <person name="Mungall C.J."/>
            <person name="Matthews B.B."/>
            <person name="Campbell K.S."/>
            <person name="Hradecky P."/>
            <person name="Huang Y."/>
            <person name="Kaminker J.S."/>
            <person name="Millburn G.H."/>
            <person name="Prochnik S.E."/>
            <person name="Smith C.D."/>
            <person name="Tupy J.L."/>
            <person name="Whitfield E.J."/>
            <person name="Bayraktaroglu L."/>
            <person name="Berman B.P."/>
            <person name="Bettencourt B.R."/>
            <person name="Celniker S.E."/>
            <person name="de Grey A.D.N.J."/>
            <person name="Drysdale R.A."/>
            <person name="Harris N.L."/>
            <person name="Richter J."/>
            <person name="Russo S."/>
            <person name="Schroeder A.J."/>
            <person name="Shu S.Q."/>
            <person name="Stapleton M."/>
            <person name="Yamada C."/>
            <person name="Ashburner M."/>
            <person name="Gelbart W.M."/>
            <person name="Rubin G.M."/>
            <person name="Lewis S.E."/>
        </authorList>
    </citation>
    <scope>GENOME REANNOTATION</scope>
    <source>
        <strain>Berkeley</strain>
    </source>
</reference>
<reference key="5">
    <citation type="journal article" date="2002" name="Genome Biol.">
        <title>A Drosophila full-length cDNA resource.</title>
        <authorList>
            <person name="Stapleton M."/>
            <person name="Carlson J.W."/>
            <person name="Brokstein P."/>
            <person name="Yu C."/>
            <person name="Champe M."/>
            <person name="George R.A."/>
            <person name="Guarin H."/>
            <person name="Kronmiller B."/>
            <person name="Pacleb J.M."/>
            <person name="Park S."/>
            <person name="Wan K.H."/>
            <person name="Rubin G.M."/>
            <person name="Celniker S.E."/>
        </authorList>
    </citation>
    <scope>NUCLEOTIDE SEQUENCE [LARGE SCALE MRNA]</scope>
    <source>
        <strain>Berkeley</strain>
        <tissue>Embryo</tissue>
    </source>
</reference>
<organism>
    <name type="scientific">Drosophila melanogaster</name>
    <name type="common">Fruit fly</name>
    <dbReference type="NCBI Taxonomy" id="7227"/>
    <lineage>
        <taxon>Eukaryota</taxon>
        <taxon>Metazoa</taxon>
        <taxon>Ecdysozoa</taxon>
        <taxon>Arthropoda</taxon>
        <taxon>Hexapoda</taxon>
        <taxon>Insecta</taxon>
        <taxon>Pterygota</taxon>
        <taxon>Neoptera</taxon>
        <taxon>Endopterygota</taxon>
        <taxon>Diptera</taxon>
        <taxon>Brachycera</taxon>
        <taxon>Muscomorpha</taxon>
        <taxon>Ephydroidea</taxon>
        <taxon>Drosophilidae</taxon>
        <taxon>Drosophila</taxon>
        <taxon>Sophophora</taxon>
    </lineage>
</organism>
<feature type="chain" id="PRO_0000206292" description="Protein ROP">
    <location>
        <begin position="1"/>
        <end position="597"/>
    </location>
</feature>
<feature type="sequence conflict" description="In Ref. 1; CAA47658/CAA47659." evidence="1" ref="1">
    <original>S</original>
    <variation>L</variation>
    <location>
        <position position="524"/>
    </location>
</feature>
<dbReference type="EMBL" id="X67218">
    <property type="protein sequence ID" value="CAA47658.1"/>
    <property type="molecule type" value="mRNA"/>
</dbReference>
<dbReference type="EMBL" id="X67219">
    <property type="protein sequence ID" value="CAA47659.1"/>
    <property type="molecule type" value="mRNA"/>
</dbReference>
<dbReference type="EMBL" id="U15967">
    <property type="protein sequence ID" value="AAB60242.1"/>
    <property type="molecule type" value="Genomic_DNA"/>
</dbReference>
<dbReference type="EMBL" id="AE014296">
    <property type="protein sequence ID" value="AAF47844.1"/>
    <property type="molecule type" value="Genomic_DNA"/>
</dbReference>
<dbReference type="EMBL" id="AY052094">
    <property type="protein sequence ID" value="AAK93518.1"/>
    <property type="molecule type" value="mRNA"/>
</dbReference>
<dbReference type="PIR" id="S33578">
    <property type="entry name" value="S33578"/>
</dbReference>
<dbReference type="RefSeq" id="NP_001261404.1">
    <property type="nucleotide sequence ID" value="NM_001274475.1"/>
</dbReference>
<dbReference type="RefSeq" id="NP_523916.2">
    <property type="nucleotide sequence ID" value="NM_079192.3"/>
</dbReference>
<dbReference type="SMR" id="Q07327"/>
<dbReference type="BioGRID" id="63973">
    <property type="interactions" value="26"/>
</dbReference>
<dbReference type="DIP" id="DIP-18152N"/>
<dbReference type="FunCoup" id="Q07327">
    <property type="interactions" value="1579"/>
</dbReference>
<dbReference type="IntAct" id="Q07327">
    <property type="interactions" value="75"/>
</dbReference>
<dbReference type="STRING" id="7227.FBpp0302752"/>
<dbReference type="PaxDb" id="7227-FBpp0302752"/>
<dbReference type="DNASU" id="38493"/>
<dbReference type="EnsemblMetazoa" id="FBtr0073263">
    <property type="protein sequence ID" value="FBpp0073119"/>
    <property type="gene ID" value="FBgn0004574"/>
</dbReference>
<dbReference type="EnsemblMetazoa" id="FBtr0310632">
    <property type="protein sequence ID" value="FBpp0302752"/>
    <property type="gene ID" value="FBgn0004574"/>
</dbReference>
<dbReference type="GeneID" id="38493"/>
<dbReference type="KEGG" id="dme:Dmel_CG15811"/>
<dbReference type="AGR" id="FB:FBgn0004574"/>
<dbReference type="CTD" id="38493"/>
<dbReference type="FlyBase" id="FBgn0004574">
    <property type="gene designation" value="Rop"/>
</dbReference>
<dbReference type="VEuPathDB" id="VectorBase:FBgn0004574"/>
<dbReference type="eggNOG" id="KOG1300">
    <property type="taxonomic scope" value="Eukaryota"/>
</dbReference>
<dbReference type="GeneTree" id="ENSGT00940000155127"/>
<dbReference type="HOGENOM" id="CLU_009210_2_1_1"/>
<dbReference type="InParanoid" id="Q07327"/>
<dbReference type="OMA" id="PFTRPHT"/>
<dbReference type="OrthoDB" id="2228at2759"/>
<dbReference type="PhylomeDB" id="Q07327"/>
<dbReference type="Reactome" id="R-DME-114516">
    <property type="pathway name" value="Disinhibition of SNARE formation"/>
</dbReference>
<dbReference type="Reactome" id="R-DME-114608">
    <property type="pathway name" value="Platelet degranulation"/>
</dbReference>
<dbReference type="Reactome" id="R-DME-181429">
    <property type="pathway name" value="Serotonin Neurotransmitter Release Cycle"/>
</dbReference>
<dbReference type="Reactome" id="R-DME-181430">
    <property type="pathway name" value="Norepinephrine Neurotransmitter Release Cycle"/>
</dbReference>
<dbReference type="Reactome" id="R-DME-210500">
    <property type="pathway name" value="Glutamate Neurotransmitter Release Cycle"/>
</dbReference>
<dbReference type="Reactome" id="R-DME-212676">
    <property type="pathway name" value="Dopamine Neurotransmitter Release Cycle"/>
</dbReference>
<dbReference type="Reactome" id="R-DME-264642">
    <property type="pathway name" value="Acetylcholine Neurotransmitter Release Cycle"/>
</dbReference>
<dbReference type="Reactome" id="R-DME-449836">
    <property type="pathway name" value="Other interleukin signaling"/>
</dbReference>
<dbReference type="Reactome" id="R-DME-888590">
    <property type="pathway name" value="GABA synthesis, release, reuptake and degradation"/>
</dbReference>
<dbReference type="SignaLink" id="Q07327"/>
<dbReference type="BioGRID-ORCS" id="38493">
    <property type="hits" value="0 hits in 3 CRISPR screens"/>
</dbReference>
<dbReference type="GenomeRNAi" id="38493"/>
<dbReference type="PRO" id="PR:Q07327"/>
<dbReference type="Proteomes" id="UP000000803">
    <property type="component" value="Chromosome 3L"/>
</dbReference>
<dbReference type="Bgee" id="FBgn0004574">
    <property type="expression patterns" value="Expressed in medullary tangential neuron Mt3 (Drosophila) in brain and 230 other cell types or tissues"/>
</dbReference>
<dbReference type="ExpressionAtlas" id="Q07327">
    <property type="expression patterns" value="baseline and differential"/>
</dbReference>
<dbReference type="GO" id="GO:0005737">
    <property type="term" value="C:cytoplasm"/>
    <property type="evidence" value="ECO:0000303"/>
    <property type="project" value="FlyBase"/>
</dbReference>
<dbReference type="GO" id="GO:0005829">
    <property type="term" value="C:cytosol"/>
    <property type="evidence" value="ECO:0000314"/>
    <property type="project" value="FlyBase"/>
</dbReference>
<dbReference type="GO" id="GO:0031234">
    <property type="term" value="C:extrinsic component of cytoplasmic side of plasma membrane"/>
    <property type="evidence" value="ECO:0000314"/>
    <property type="project" value="FlyBase"/>
</dbReference>
<dbReference type="GO" id="GO:0016020">
    <property type="term" value="C:membrane"/>
    <property type="evidence" value="ECO:0000304"/>
    <property type="project" value="FlyBase"/>
</dbReference>
<dbReference type="GO" id="GO:0005886">
    <property type="term" value="C:plasma membrane"/>
    <property type="evidence" value="ECO:0000318"/>
    <property type="project" value="GO_Central"/>
</dbReference>
<dbReference type="GO" id="GO:0030141">
    <property type="term" value="C:secretory granule"/>
    <property type="evidence" value="ECO:0000318"/>
    <property type="project" value="GO_Central"/>
</dbReference>
<dbReference type="GO" id="GO:0043195">
    <property type="term" value="C:terminal bouton"/>
    <property type="evidence" value="ECO:0000314"/>
    <property type="project" value="FlyBase"/>
</dbReference>
<dbReference type="GO" id="GO:0000149">
    <property type="term" value="F:SNARE binding"/>
    <property type="evidence" value="ECO:0000250"/>
    <property type="project" value="FlyBase"/>
</dbReference>
<dbReference type="GO" id="GO:0019905">
    <property type="term" value="F:syntaxin binding"/>
    <property type="evidence" value="ECO:0000318"/>
    <property type="project" value="GO_Central"/>
</dbReference>
<dbReference type="GO" id="GO:0007268">
    <property type="term" value="P:chemical synaptic transmission"/>
    <property type="evidence" value="ECO:0000314"/>
    <property type="project" value="FlyBase"/>
</dbReference>
<dbReference type="GO" id="GO:0006887">
    <property type="term" value="P:exocytosis"/>
    <property type="evidence" value="ECO:0000304"/>
    <property type="project" value="FlyBase"/>
</dbReference>
<dbReference type="GO" id="GO:1990182">
    <property type="term" value="P:exosomal secretion"/>
    <property type="evidence" value="ECO:0000315"/>
    <property type="project" value="FlyBase"/>
</dbReference>
<dbReference type="GO" id="GO:0030707">
    <property type="term" value="P:follicle cell of egg chamber development"/>
    <property type="evidence" value="ECO:0000315"/>
    <property type="project" value="FlyBase"/>
</dbReference>
<dbReference type="GO" id="GO:0006886">
    <property type="term" value="P:intracellular protein transport"/>
    <property type="evidence" value="ECO:0000318"/>
    <property type="project" value="GO_Central"/>
</dbReference>
<dbReference type="GO" id="GO:0035002">
    <property type="term" value="P:liquid clearance, open tracheal system"/>
    <property type="evidence" value="ECO:0000315"/>
    <property type="project" value="FlyBase"/>
</dbReference>
<dbReference type="GO" id="GO:0007269">
    <property type="term" value="P:neurotransmitter secretion"/>
    <property type="evidence" value="ECO:0000315"/>
    <property type="project" value="FlyBase"/>
</dbReference>
<dbReference type="GO" id="GO:1900006">
    <property type="term" value="P:positive regulation of dendrite development"/>
    <property type="evidence" value="ECO:0000315"/>
    <property type="project" value="FlyBase"/>
</dbReference>
<dbReference type="GO" id="GO:0099525">
    <property type="term" value="P:presynaptic dense core vesicle exocytosis"/>
    <property type="evidence" value="ECO:0000318"/>
    <property type="project" value="GO_Central"/>
</dbReference>
<dbReference type="GO" id="GO:0007317">
    <property type="term" value="P:regulation of pole plasm oskar mRNA localization"/>
    <property type="evidence" value="ECO:0000315"/>
    <property type="project" value="FlyBase"/>
</dbReference>
<dbReference type="GO" id="GO:0009416">
    <property type="term" value="P:response to light stimulus"/>
    <property type="evidence" value="ECO:0000315"/>
    <property type="project" value="FlyBase"/>
</dbReference>
<dbReference type="GO" id="GO:0032940">
    <property type="term" value="P:secretion by cell"/>
    <property type="evidence" value="ECO:0000314"/>
    <property type="project" value="FlyBase"/>
</dbReference>
<dbReference type="GO" id="GO:0016082">
    <property type="term" value="P:synaptic vesicle priming"/>
    <property type="evidence" value="ECO:0000303"/>
    <property type="project" value="FlyBase"/>
</dbReference>
<dbReference type="GO" id="GO:0048489">
    <property type="term" value="P:synaptic vesicle transport"/>
    <property type="evidence" value="ECO:0000304"/>
    <property type="project" value="FlyBase"/>
</dbReference>
<dbReference type="GO" id="GO:0006904">
    <property type="term" value="P:vesicle docking involved in exocytosis"/>
    <property type="evidence" value="ECO:0000318"/>
    <property type="project" value="GO_Central"/>
</dbReference>
<dbReference type="GO" id="GO:0016192">
    <property type="term" value="P:vesicle-mediated transport"/>
    <property type="evidence" value="ECO:0000250"/>
    <property type="project" value="FlyBase"/>
</dbReference>
<dbReference type="FunFam" id="1.25.40.60:FF:000001">
    <property type="entry name" value="syntaxin-binding protein 1 isoform X2"/>
    <property type="match status" value="1"/>
</dbReference>
<dbReference type="FunFam" id="3.40.50.2060:FF:000001">
    <property type="entry name" value="syntaxin-binding protein 1 isoform X2"/>
    <property type="match status" value="1"/>
</dbReference>
<dbReference type="FunFam" id="3.90.830.10:FF:000001">
    <property type="entry name" value="syntaxin-binding protein 1 isoform X2"/>
    <property type="match status" value="1"/>
</dbReference>
<dbReference type="Gene3D" id="1.25.40.60">
    <property type="match status" value="1"/>
</dbReference>
<dbReference type="Gene3D" id="3.40.50.1910">
    <property type="match status" value="1"/>
</dbReference>
<dbReference type="Gene3D" id="3.40.50.2060">
    <property type="match status" value="1"/>
</dbReference>
<dbReference type="Gene3D" id="3.90.830.10">
    <property type="entry name" value="Syntaxin Binding Protein 1, Chain A, domain 2"/>
    <property type="match status" value="1"/>
</dbReference>
<dbReference type="InterPro" id="IPR043154">
    <property type="entry name" value="Sec-1-like_dom1"/>
</dbReference>
<dbReference type="InterPro" id="IPR043127">
    <property type="entry name" value="Sec-1-like_dom3a"/>
</dbReference>
<dbReference type="InterPro" id="IPR001619">
    <property type="entry name" value="Sec1-like"/>
</dbReference>
<dbReference type="InterPro" id="IPR027482">
    <property type="entry name" value="Sec1-like_dom2"/>
</dbReference>
<dbReference type="InterPro" id="IPR036045">
    <property type="entry name" value="Sec1-like_sf"/>
</dbReference>
<dbReference type="PANTHER" id="PTHR11679">
    <property type="entry name" value="VESICLE PROTEIN SORTING-ASSOCIATED"/>
    <property type="match status" value="1"/>
</dbReference>
<dbReference type="Pfam" id="PF00995">
    <property type="entry name" value="Sec1"/>
    <property type="match status" value="1"/>
</dbReference>
<dbReference type="PIRSF" id="PIRSF005715">
    <property type="entry name" value="VPS45_Sec1"/>
    <property type="match status" value="1"/>
</dbReference>
<dbReference type="SUPFAM" id="SSF56815">
    <property type="entry name" value="Sec1/munc18-like (SM) proteins"/>
    <property type="match status" value="1"/>
</dbReference>
<comment type="function">
    <text>May be a component of one of the vesicle trafficking pathways. May interact functionally with Ras2 protein.</text>
</comment>
<comment type="subcellular location">
    <subcellularLocation>
        <location evidence="1">Cytoplasm</location>
        <location evidence="1">Cytosol</location>
    </subcellularLocation>
    <subcellularLocation>
        <location evidence="1">Membrane</location>
        <topology evidence="1">Peripheral membrane protein</topology>
    </subcellularLocation>
    <text evidence="1">Soluble or bound to membranes.</text>
</comment>
<comment type="developmental stage">
    <text>Expression is low in unfertilized eggs and early embryos, increases in older embryos and young larvae, is low in mature larvae and increases strongly in pupae and adult flies. Expression during embryogenesis is restricted to the central nervous system (CNS) and the Garland cells, a small group of nephrocytes that takes up waste materials from the hemolymph by endocytosis. In post embryonic stages, expression is seen in the larval salivary glands and the CNS, and in the adult CNS and reproductive systems.</text>
</comment>
<comment type="similarity">
    <text evidence="1">Belongs to the STXBP/unc-18/SEC1 family.</text>
</comment>
<evidence type="ECO:0000305" key="1"/>
<proteinExistence type="evidence at transcript level"/>
<sequence>MALKVLVGQKLMNEVVKYKPPPPKKQGVTSAAGAGGMEWRVLVVDKLGMRMVSACTKMHEISAEGITLVEDINKKREPLPTMDAIYLITPSDESVRGLIRDFENPARPMYRYAHVFFTEVCPEELFNDLCKSCAAGKIKTLKEINIAFLPYECQVFSLDSPDTFQCLYSPAFASIRSKHIERIAEQIATLCATLGEYPNVRYRSDWDRNIDLAASVQQKLDAYKADDATMGEGPEKARSQLLILDRGFDCVSPLLHELTLQAMAYDLLPIVNDVYRYTPGPNQPDKEVLLDENDDLWVELRHEHIAVVSTQVTQNLKKFTDSKRMGSADKSSMRDLSQMIKKMPQYQKELSKYSTHLHLAEDCMKSYQNYVDKLCRVEQDLAMGTDAEGEKIKDHMRNIVPILLDANVSNYDKVRIIALYVMIKNGISEENLTKLFTHAQLSPKDQDMVRNLSCLGINVIADSRKKQYSVPRKERTTESTYQMSRWTPVIKDIMEDCIEDKLDLRHFPFLEGRAQNTNYHAPTSARYGHWHKDKGQAQVKNVPRLIVFIVGGVSMSEMRCAYEVTNAVRNWEVLVGSSHILSPEIFLSDLGSLSKED</sequence>
<keyword id="KW-0963">Cytoplasm</keyword>
<keyword id="KW-0472">Membrane</keyword>
<keyword id="KW-0653">Protein transport</keyword>
<keyword id="KW-1185">Reference proteome</keyword>
<keyword id="KW-0813">Transport</keyword>
<accession>Q07327</accession>
<accession>Q24010</accession>
<accession>Q9VZH8</accession>
<gene>
    <name type="primary">Rop</name>
    <name type="synonym">cs1</name>
    <name type="ORF">CG15811</name>
</gene>